<sequence length="93" mass="9923">MISIDLTLKYSPMPVSVQRKEKDGAEALYQTIVTAMQGDRPQVLELTCEKQTEKKVAIMSDQISAVIVSEKDGAASAGKVPGFAALGQIVNQG</sequence>
<evidence type="ECO:0000255" key="1">
    <source>
        <dbReference type="HAMAP-Rule" id="MF_01360"/>
    </source>
</evidence>
<name>Y197A_SYNY3</name>
<proteinExistence type="evidence at protein level"/>
<organism>
    <name type="scientific">Synechocystis sp. (strain ATCC 27184 / PCC 6803 / Kazusa)</name>
    <dbReference type="NCBI Taxonomy" id="1111708"/>
    <lineage>
        <taxon>Bacteria</taxon>
        <taxon>Bacillati</taxon>
        <taxon>Cyanobacteriota</taxon>
        <taxon>Cyanophyceae</taxon>
        <taxon>Synechococcales</taxon>
        <taxon>Merismopediaceae</taxon>
        <taxon>Synechocystis</taxon>
    </lineage>
</organism>
<comment type="similarity">
    <text evidence="1">Belongs to the UPF0367 family.</text>
</comment>
<keyword id="KW-0903">Direct protein sequencing</keyword>
<keyword id="KW-1185">Reference proteome</keyword>
<reference key="1">
    <citation type="journal article" date="1996" name="DNA Res.">
        <title>Sequence analysis of the genome of the unicellular cyanobacterium Synechocystis sp. strain PCC6803. II. Sequence determination of the entire genome and assignment of potential protein-coding regions.</title>
        <authorList>
            <person name="Kaneko T."/>
            <person name="Sato S."/>
            <person name="Kotani H."/>
            <person name="Tanaka A."/>
            <person name="Asamizu E."/>
            <person name="Nakamura Y."/>
            <person name="Miyajima N."/>
            <person name="Hirosawa M."/>
            <person name="Sugiura M."/>
            <person name="Sasamoto S."/>
            <person name="Kimura T."/>
            <person name="Hosouchi T."/>
            <person name="Matsuno A."/>
            <person name="Muraki A."/>
            <person name="Nakazaki N."/>
            <person name="Naruo K."/>
            <person name="Okumura S."/>
            <person name="Shimpo S."/>
            <person name="Takeuchi C."/>
            <person name="Wada T."/>
            <person name="Watanabe A."/>
            <person name="Yamada M."/>
            <person name="Yasuda M."/>
            <person name="Tabata S."/>
        </authorList>
    </citation>
    <scope>NUCLEOTIDE SEQUENCE [LARGE SCALE GENOMIC DNA]</scope>
    <source>
        <strain>ATCC 27184 / PCC 6803 / Kazusa</strain>
    </source>
</reference>
<reference key="2">
    <citation type="journal article" date="1997" name="Electrophoresis">
        <title>Towards a proteome project of cyanobacterium Synechocystis sp. strain PCC6803: linking 130 protein spots with their respective genes.</title>
        <authorList>
            <person name="Sazuka T."/>
            <person name="Ohara O."/>
        </authorList>
    </citation>
    <scope>PROTEIN SEQUENCE OF 1-20</scope>
</reference>
<dbReference type="EMBL" id="BA000022">
    <property type="protein sequence ID" value="BAA16942.1"/>
    <property type="molecule type" value="Genomic_DNA"/>
</dbReference>
<dbReference type="PIR" id="S74791">
    <property type="entry name" value="S74791"/>
</dbReference>
<dbReference type="IntAct" id="P72925">
    <property type="interactions" value="1"/>
</dbReference>
<dbReference type="STRING" id="1148.gene:10497802"/>
<dbReference type="PaxDb" id="1148-1652016"/>
<dbReference type="EnsemblBacteria" id="BAA16942">
    <property type="protein sequence ID" value="BAA16942"/>
    <property type="gene ID" value="BAA16942"/>
</dbReference>
<dbReference type="KEGG" id="syn:ssl1972"/>
<dbReference type="eggNOG" id="ENOG5032YB3">
    <property type="taxonomic scope" value="Bacteria"/>
</dbReference>
<dbReference type="InParanoid" id="P72925"/>
<dbReference type="Proteomes" id="UP000001425">
    <property type="component" value="Chromosome"/>
</dbReference>
<dbReference type="HAMAP" id="MF_01360">
    <property type="entry name" value="UPF0367"/>
    <property type="match status" value="1"/>
</dbReference>
<dbReference type="InterPro" id="IPR020885">
    <property type="entry name" value="UPF0367"/>
</dbReference>
<dbReference type="NCBIfam" id="NF010236">
    <property type="entry name" value="PRK13683.1"/>
    <property type="match status" value="1"/>
</dbReference>
<feature type="chain" id="PRO_0000240507" description="UPF0367 protein ssl1972">
    <location>
        <begin position="1"/>
        <end position="93"/>
    </location>
</feature>
<accession>P72925</accession>
<gene>
    <name type="ordered locus">ssl1972</name>
</gene>
<protein>
    <recommendedName>
        <fullName evidence="1">UPF0367 protein ssl1972</fullName>
    </recommendedName>
</protein>